<proteinExistence type="inferred from homology"/>
<dbReference type="EMBL" id="CP001277">
    <property type="protein sequence ID" value="ACQ68528.1"/>
    <property type="molecule type" value="Genomic_DNA"/>
</dbReference>
<dbReference type="RefSeq" id="WP_015874287.1">
    <property type="nucleotide sequence ID" value="NC_012751.1"/>
</dbReference>
<dbReference type="SMR" id="C4K7I5"/>
<dbReference type="STRING" id="572265.HDEF_1940"/>
<dbReference type="GeneID" id="66261511"/>
<dbReference type="KEGG" id="hde:HDEF_1940"/>
<dbReference type="eggNOG" id="COG0632">
    <property type="taxonomic scope" value="Bacteria"/>
</dbReference>
<dbReference type="HOGENOM" id="CLU_087936_0_0_6"/>
<dbReference type="Proteomes" id="UP000002334">
    <property type="component" value="Chromosome"/>
</dbReference>
<dbReference type="GO" id="GO:0005737">
    <property type="term" value="C:cytoplasm"/>
    <property type="evidence" value="ECO:0007669"/>
    <property type="project" value="UniProtKB-SubCell"/>
</dbReference>
<dbReference type="GO" id="GO:0009379">
    <property type="term" value="C:Holliday junction helicase complex"/>
    <property type="evidence" value="ECO:0007669"/>
    <property type="project" value="InterPro"/>
</dbReference>
<dbReference type="GO" id="GO:0048476">
    <property type="term" value="C:Holliday junction resolvase complex"/>
    <property type="evidence" value="ECO:0007669"/>
    <property type="project" value="UniProtKB-UniRule"/>
</dbReference>
<dbReference type="GO" id="GO:0005524">
    <property type="term" value="F:ATP binding"/>
    <property type="evidence" value="ECO:0007669"/>
    <property type="project" value="InterPro"/>
</dbReference>
<dbReference type="GO" id="GO:0000400">
    <property type="term" value="F:four-way junction DNA binding"/>
    <property type="evidence" value="ECO:0007669"/>
    <property type="project" value="UniProtKB-UniRule"/>
</dbReference>
<dbReference type="GO" id="GO:0009378">
    <property type="term" value="F:four-way junction helicase activity"/>
    <property type="evidence" value="ECO:0007669"/>
    <property type="project" value="InterPro"/>
</dbReference>
<dbReference type="GO" id="GO:0006310">
    <property type="term" value="P:DNA recombination"/>
    <property type="evidence" value="ECO:0007669"/>
    <property type="project" value="UniProtKB-UniRule"/>
</dbReference>
<dbReference type="GO" id="GO:0006281">
    <property type="term" value="P:DNA repair"/>
    <property type="evidence" value="ECO:0007669"/>
    <property type="project" value="UniProtKB-UniRule"/>
</dbReference>
<dbReference type="CDD" id="cd14332">
    <property type="entry name" value="UBA_RuvA_C"/>
    <property type="match status" value="1"/>
</dbReference>
<dbReference type="FunFam" id="2.40.50.140:FF:000083">
    <property type="entry name" value="Holliday junction ATP-dependent DNA helicase RuvA"/>
    <property type="match status" value="1"/>
</dbReference>
<dbReference type="Gene3D" id="1.10.150.20">
    <property type="entry name" value="5' to 3' exonuclease, C-terminal subdomain"/>
    <property type="match status" value="1"/>
</dbReference>
<dbReference type="Gene3D" id="1.10.8.10">
    <property type="entry name" value="DNA helicase RuvA subunit, C-terminal domain"/>
    <property type="match status" value="1"/>
</dbReference>
<dbReference type="Gene3D" id="2.40.50.140">
    <property type="entry name" value="Nucleic acid-binding proteins"/>
    <property type="match status" value="1"/>
</dbReference>
<dbReference type="HAMAP" id="MF_00031">
    <property type="entry name" value="DNA_HJ_migration_RuvA"/>
    <property type="match status" value="1"/>
</dbReference>
<dbReference type="InterPro" id="IPR013849">
    <property type="entry name" value="DNA_helicase_Holl-junc_RuvA_I"/>
</dbReference>
<dbReference type="InterPro" id="IPR003583">
    <property type="entry name" value="Hlx-hairpin-Hlx_DNA-bd_motif"/>
</dbReference>
<dbReference type="InterPro" id="IPR012340">
    <property type="entry name" value="NA-bd_OB-fold"/>
</dbReference>
<dbReference type="InterPro" id="IPR000085">
    <property type="entry name" value="RuvA"/>
</dbReference>
<dbReference type="InterPro" id="IPR010994">
    <property type="entry name" value="RuvA_2-like"/>
</dbReference>
<dbReference type="InterPro" id="IPR011114">
    <property type="entry name" value="RuvA_C"/>
</dbReference>
<dbReference type="InterPro" id="IPR036267">
    <property type="entry name" value="RuvA_C_sf"/>
</dbReference>
<dbReference type="NCBIfam" id="TIGR00084">
    <property type="entry name" value="ruvA"/>
    <property type="match status" value="1"/>
</dbReference>
<dbReference type="Pfam" id="PF14520">
    <property type="entry name" value="HHH_5"/>
    <property type="match status" value="1"/>
</dbReference>
<dbReference type="Pfam" id="PF07499">
    <property type="entry name" value="RuvA_C"/>
    <property type="match status" value="1"/>
</dbReference>
<dbReference type="Pfam" id="PF01330">
    <property type="entry name" value="RuvA_N"/>
    <property type="match status" value="1"/>
</dbReference>
<dbReference type="SMART" id="SM00278">
    <property type="entry name" value="HhH1"/>
    <property type="match status" value="2"/>
</dbReference>
<dbReference type="SUPFAM" id="SSF46929">
    <property type="entry name" value="DNA helicase RuvA subunit, C-terminal domain"/>
    <property type="match status" value="1"/>
</dbReference>
<dbReference type="SUPFAM" id="SSF50249">
    <property type="entry name" value="Nucleic acid-binding proteins"/>
    <property type="match status" value="1"/>
</dbReference>
<dbReference type="SUPFAM" id="SSF47781">
    <property type="entry name" value="RuvA domain 2-like"/>
    <property type="match status" value="1"/>
</dbReference>
<feature type="chain" id="PRO_1000201994" description="Holliday junction branch migration complex subunit RuvA">
    <location>
        <begin position="1"/>
        <end position="204"/>
    </location>
</feature>
<feature type="region of interest" description="Domain I" evidence="1">
    <location>
        <begin position="1"/>
        <end position="64"/>
    </location>
</feature>
<feature type="region of interest" description="Domain II" evidence="1">
    <location>
        <begin position="65"/>
        <end position="143"/>
    </location>
</feature>
<feature type="region of interest" description="Flexible linker" evidence="1">
    <location>
        <begin position="144"/>
        <end position="155"/>
    </location>
</feature>
<feature type="region of interest" description="Domain III" evidence="1">
    <location>
        <begin position="156"/>
        <end position="204"/>
    </location>
</feature>
<organism>
    <name type="scientific">Hamiltonella defensa subsp. Acyrthosiphon pisum (strain 5AT)</name>
    <dbReference type="NCBI Taxonomy" id="572265"/>
    <lineage>
        <taxon>Bacteria</taxon>
        <taxon>Pseudomonadati</taxon>
        <taxon>Pseudomonadota</taxon>
        <taxon>Gammaproteobacteria</taxon>
        <taxon>Enterobacterales</taxon>
        <taxon>Enterobacteriaceae</taxon>
        <taxon>aphid secondary symbionts</taxon>
        <taxon>Candidatus Hamiltonella</taxon>
    </lineage>
</organism>
<evidence type="ECO:0000255" key="1">
    <source>
        <dbReference type="HAMAP-Rule" id="MF_00031"/>
    </source>
</evidence>
<name>RUVA_HAMD5</name>
<sequence length="204" mass="22663">MISRMKGIILEKQPPWILLDIQGMGYDIQLPMTCFYQLPELGQEAIIFTHFVVREDAQLLYGFHHPKERAMFSELIKVNGVGPKLGLAILSGMSSEEFICALEKEDISNLIKLPGVGKKTAERLLVEMKDRIKNLNKNLFKSTADHMLSSVSTDLSAKSAEAEAISALISLGYKPQEAAQLIKNIAQPDLDSQALIKHALRSTL</sequence>
<keyword id="KW-0963">Cytoplasm</keyword>
<keyword id="KW-0227">DNA damage</keyword>
<keyword id="KW-0233">DNA recombination</keyword>
<keyword id="KW-0234">DNA repair</keyword>
<keyword id="KW-0238">DNA-binding</keyword>
<protein>
    <recommendedName>
        <fullName evidence="1">Holliday junction branch migration complex subunit RuvA</fullName>
    </recommendedName>
</protein>
<reference key="1">
    <citation type="journal article" date="2009" name="Proc. Natl. Acad. Sci. U.S.A.">
        <title>Hamiltonella defensa, genome evolution of protective bacterial endosymbiont from pathogenic ancestors.</title>
        <authorList>
            <person name="Degnan P.H."/>
            <person name="Yu Y."/>
            <person name="Sisneros N."/>
            <person name="Wing R.A."/>
            <person name="Moran N.A."/>
        </authorList>
    </citation>
    <scope>NUCLEOTIDE SEQUENCE [LARGE SCALE GENOMIC DNA]</scope>
    <source>
        <strain>5AT</strain>
    </source>
</reference>
<gene>
    <name evidence="1" type="primary">ruvA</name>
    <name type="ordered locus">HDEF_1940</name>
</gene>
<accession>C4K7I5</accession>
<comment type="function">
    <text evidence="1">The RuvA-RuvB-RuvC complex processes Holliday junction (HJ) DNA during genetic recombination and DNA repair, while the RuvA-RuvB complex plays an important role in the rescue of blocked DNA replication forks via replication fork reversal (RFR). RuvA specifically binds to HJ cruciform DNA, conferring on it an open structure. The RuvB hexamer acts as an ATP-dependent pump, pulling dsDNA into and through the RuvAB complex. HJ branch migration allows RuvC to scan DNA until it finds its consensus sequence, where it cleaves and resolves the cruciform DNA.</text>
</comment>
<comment type="subunit">
    <text evidence="1">Homotetramer. Forms an RuvA(8)-RuvB(12)-Holliday junction (HJ) complex. HJ DNA is sandwiched between 2 RuvA tetramers; dsDNA enters through RuvA and exits via RuvB. An RuvB hexamer assembles on each DNA strand where it exits the tetramer. Each RuvB hexamer is contacted by two RuvA subunits (via domain III) on 2 adjacent RuvB subunits; this complex drives branch migration. In the full resolvosome a probable DNA-RuvA(4)-RuvB(12)-RuvC(2) complex forms which resolves the HJ.</text>
</comment>
<comment type="subcellular location">
    <subcellularLocation>
        <location evidence="1">Cytoplasm</location>
    </subcellularLocation>
</comment>
<comment type="domain">
    <text evidence="1">Has three domains with a flexible linker between the domains II and III and assumes an 'L' shape. Domain III is highly mobile and contacts RuvB.</text>
</comment>
<comment type="similarity">
    <text evidence="1">Belongs to the RuvA family.</text>
</comment>